<proteinExistence type="inferred from homology"/>
<gene>
    <name evidence="1" type="primary">ubiD</name>
    <name type="ordered locus">SF3919</name>
    <name type="ordered locus">S3833</name>
</gene>
<name>UBID_SHIFL</name>
<organism>
    <name type="scientific">Shigella flexneri</name>
    <dbReference type="NCBI Taxonomy" id="623"/>
    <lineage>
        <taxon>Bacteria</taxon>
        <taxon>Pseudomonadati</taxon>
        <taxon>Pseudomonadota</taxon>
        <taxon>Gammaproteobacteria</taxon>
        <taxon>Enterobacterales</taxon>
        <taxon>Enterobacteriaceae</taxon>
        <taxon>Shigella</taxon>
    </lineage>
</organism>
<accession>Q83PG4</accession>
<accession>Q7UB55</accession>
<sequence length="497" mass="55646">MDAMKYNDLRDFLTLLEQQGELKRITLPVDPHLEITEIADRTLRAGGPALLFENPKGYSMPVLCNLFGTPKRVAMGMGQEDVSTLREVGKLLAFLKEPEPPKGFRDLFDKLPQFKQVLNMPTKRLRGAPCQQKIVSGDDVDLNRIPIMTCWPEDAAPLITWGLTVTRGPHKERQNLGIYRQQLIGKNKLIMRWLSHRGGALDYQEWCAAHPGERFPVSVALGADPATILGAVTPVPDTLSEYAFAGLLRGTKTEVVKCISNDLEVPASAEIVLEGYIDPGEMAPEGPYGDHTGYYNEVDNFPVFTVTHITQREDAIYHSTYTGRPPDEPAVLGVALNEVFVPILQKQFPEIVDFYLPPEGCSYRLAVVTIKKQYAGHAKRVMMGVWSFLRQFMYTKFVIVCDDDVNARDWNDVIWAITTRMDPARDTVLVENTPIDYLDFASPVSGLGSKMGLDATNKWPGETQREWGRPIKKDPDVVAHIDAIWDELAIFNNGKSA</sequence>
<dbReference type="EC" id="4.1.1.98" evidence="1"/>
<dbReference type="EMBL" id="AE005674">
    <property type="protein sequence ID" value="AAN45354.1"/>
    <property type="molecule type" value="Genomic_DNA"/>
</dbReference>
<dbReference type="EMBL" id="AE014073">
    <property type="protein sequence ID" value="AAP18844.1"/>
    <property type="molecule type" value="Genomic_DNA"/>
</dbReference>
<dbReference type="RefSeq" id="WP_000339819.1">
    <property type="nucleotide sequence ID" value="NZ_CP123365.1"/>
</dbReference>
<dbReference type="SMR" id="Q83PG4"/>
<dbReference type="STRING" id="198214.SF3919"/>
<dbReference type="PaxDb" id="198214-SF3919"/>
<dbReference type="KEGG" id="sfl:SF3919"/>
<dbReference type="KEGG" id="sfx:S3833"/>
<dbReference type="PATRIC" id="fig|198214.7.peg.4619"/>
<dbReference type="HOGENOM" id="CLU_023348_4_1_6"/>
<dbReference type="UniPathway" id="UPA00232"/>
<dbReference type="Proteomes" id="UP000001006">
    <property type="component" value="Chromosome"/>
</dbReference>
<dbReference type="Proteomes" id="UP000002673">
    <property type="component" value="Chromosome"/>
</dbReference>
<dbReference type="GO" id="GO:0005829">
    <property type="term" value="C:cytosol"/>
    <property type="evidence" value="ECO:0007669"/>
    <property type="project" value="TreeGrafter"/>
</dbReference>
<dbReference type="GO" id="GO:0005886">
    <property type="term" value="C:plasma membrane"/>
    <property type="evidence" value="ECO:0007669"/>
    <property type="project" value="UniProtKB-SubCell"/>
</dbReference>
<dbReference type="GO" id="GO:0008694">
    <property type="term" value="F:3-octaprenyl-4-hydroxybenzoate carboxy-lyase activity"/>
    <property type="evidence" value="ECO:0007669"/>
    <property type="project" value="UniProtKB-UniRule"/>
</dbReference>
<dbReference type="GO" id="GO:0046872">
    <property type="term" value="F:metal ion binding"/>
    <property type="evidence" value="ECO:0007669"/>
    <property type="project" value="UniProtKB-KW"/>
</dbReference>
<dbReference type="GO" id="GO:0006744">
    <property type="term" value="P:ubiquinone biosynthetic process"/>
    <property type="evidence" value="ECO:0007669"/>
    <property type="project" value="UniProtKB-UniRule"/>
</dbReference>
<dbReference type="FunFam" id="1.20.5.570:FF:000001">
    <property type="entry name" value="3-octaprenyl-4-hydroxybenzoate carboxy-lyase"/>
    <property type="match status" value="1"/>
</dbReference>
<dbReference type="FunFam" id="3.40.1670.10:FF:000001">
    <property type="entry name" value="3-octaprenyl-4-hydroxybenzoate carboxy-lyase"/>
    <property type="match status" value="1"/>
</dbReference>
<dbReference type="Gene3D" id="1.20.5.570">
    <property type="entry name" value="Single helix bin"/>
    <property type="match status" value="1"/>
</dbReference>
<dbReference type="Gene3D" id="3.40.1670.10">
    <property type="entry name" value="UbiD C-terminal domain-like"/>
    <property type="match status" value="1"/>
</dbReference>
<dbReference type="HAMAP" id="MF_01636">
    <property type="entry name" value="UbiD"/>
    <property type="match status" value="1"/>
</dbReference>
<dbReference type="InterPro" id="IPR002830">
    <property type="entry name" value="UbiD"/>
</dbReference>
<dbReference type="InterPro" id="IPR049381">
    <property type="entry name" value="UbiD-like_C"/>
</dbReference>
<dbReference type="InterPro" id="IPR049383">
    <property type="entry name" value="UbiD-like_N"/>
</dbReference>
<dbReference type="InterPro" id="IPR023677">
    <property type="entry name" value="UbiD_bacteria"/>
</dbReference>
<dbReference type="InterPro" id="IPR048304">
    <property type="entry name" value="UbiD_Rift_dom"/>
</dbReference>
<dbReference type="NCBIfam" id="NF008175">
    <property type="entry name" value="PRK10922.1"/>
    <property type="match status" value="1"/>
</dbReference>
<dbReference type="NCBIfam" id="TIGR00148">
    <property type="entry name" value="UbiD family decarboxylase"/>
    <property type="match status" value="1"/>
</dbReference>
<dbReference type="PANTHER" id="PTHR30108">
    <property type="entry name" value="3-OCTAPRENYL-4-HYDROXYBENZOATE CARBOXY-LYASE-RELATED"/>
    <property type="match status" value="1"/>
</dbReference>
<dbReference type="PANTHER" id="PTHR30108:SF17">
    <property type="entry name" value="FERULIC ACID DECARBOXYLASE 1"/>
    <property type="match status" value="1"/>
</dbReference>
<dbReference type="Pfam" id="PF01977">
    <property type="entry name" value="UbiD"/>
    <property type="match status" value="1"/>
</dbReference>
<dbReference type="Pfam" id="PF20696">
    <property type="entry name" value="UbiD_C"/>
    <property type="match status" value="1"/>
</dbReference>
<dbReference type="Pfam" id="PF20695">
    <property type="entry name" value="UbiD_N"/>
    <property type="match status" value="1"/>
</dbReference>
<dbReference type="SUPFAM" id="SSF50475">
    <property type="entry name" value="FMN-binding split barrel"/>
    <property type="match status" value="1"/>
</dbReference>
<dbReference type="SUPFAM" id="SSF143968">
    <property type="entry name" value="UbiD C-terminal domain-like"/>
    <property type="match status" value="1"/>
</dbReference>
<feature type="chain" id="PRO_0000267701" description="3-octaprenyl-4-hydroxybenzoate carboxy-lyase">
    <location>
        <begin position="1"/>
        <end position="497"/>
    </location>
</feature>
<feature type="active site" description="Proton donor" evidence="1">
    <location>
        <position position="290"/>
    </location>
</feature>
<feature type="binding site" evidence="1">
    <location>
        <position position="175"/>
    </location>
    <ligand>
        <name>Mn(2+)</name>
        <dbReference type="ChEBI" id="CHEBI:29035"/>
    </ligand>
</feature>
<feature type="binding site" evidence="1">
    <location>
        <begin position="178"/>
        <end position="180"/>
    </location>
    <ligand>
        <name>prenylated FMN</name>
        <dbReference type="ChEBI" id="CHEBI:87746"/>
    </ligand>
</feature>
<feature type="binding site" evidence="1">
    <location>
        <begin position="192"/>
        <end position="194"/>
    </location>
    <ligand>
        <name>prenylated FMN</name>
        <dbReference type="ChEBI" id="CHEBI:87746"/>
    </ligand>
</feature>
<feature type="binding site" evidence="1">
    <location>
        <begin position="197"/>
        <end position="198"/>
    </location>
    <ligand>
        <name>prenylated FMN</name>
        <dbReference type="ChEBI" id="CHEBI:87746"/>
    </ligand>
</feature>
<feature type="binding site" evidence="1">
    <location>
        <position position="241"/>
    </location>
    <ligand>
        <name>Mn(2+)</name>
        <dbReference type="ChEBI" id="CHEBI:29035"/>
    </ligand>
</feature>
<feature type="sequence conflict" description="In Ref. 2; AAP18844." evidence="2" ref="2">
    <original>T</original>
    <variation>A</variation>
    <location>
        <position position="84"/>
    </location>
</feature>
<comment type="function">
    <text evidence="1">Catalyzes the decarboxylation of 3-octaprenyl-4-hydroxy benzoate to 2-octaprenylphenol, an intermediate step in ubiquinone biosynthesis.</text>
</comment>
<comment type="catalytic activity">
    <reaction evidence="1">
        <text>a 4-hydroxy-3-(all-trans-polyprenyl)benzoate + H(+) = a 2-(all-trans-polyprenyl)phenol + CO2</text>
        <dbReference type="Rhea" id="RHEA:41680"/>
        <dbReference type="Rhea" id="RHEA-COMP:9514"/>
        <dbReference type="Rhea" id="RHEA-COMP:9516"/>
        <dbReference type="ChEBI" id="CHEBI:1269"/>
        <dbReference type="ChEBI" id="CHEBI:15378"/>
        <dbReference type="ChEBI" id="CHEBI:16526"/>
        <dbReference type="ChEBI" id="CHEBI:78396"/>
        <dbReference type="EC" id="4.1.1.98"/>
    </reaction>
</comment>
<comment type="cofactor">
    <cofactor evidence="1">
        <name>prenylated FMN</name>
        <dbReference type="ChEBI" id="CHEBI:87746"/>
    </cofactor>
    <text evidence="1">Binds 1 prenylated FMN per subunit.</text>
</comment>
<comment type="cofactor">
    <cofactor evidence="1">
        <name>Mn(2+)</name>
        <dbReference type="ChEBI" id="CHEBI:29035"/>
    </cofactor>
</comment>
<comment type="pathway">
    <text evidence="1">Cofactor biosynthesis; ubiquinone biosynthesis.</text>
</comment>
<comment type="subunit">
    <text evidence="1">Homohexamer.</text>
</comment>
<comment type="subcellular location">
    <subcellularLocation>
        <location evidence="1">Cell membrane</location>
        <topology evidence="1">Peripheral membrane protein</topology>
    </subcellularLocation>
</comment>
<comment type="similarity">
    <text evidence="1">Belongs to the UbiD family.</text>
</comment>
<keyword id="KW-1003">Cell membrane</keyword>
<keyword id="KW-0210">Decarboxylase</keyword>
<keyword id="KW-0285">Flavoprotein</keyword>
<keyword id="KW-0288">FMN</keyword>
<keyword id="KW-0456">Lyase</keyword>
<keyword id="KW-0464">Manganese</keyword>
<keyword id="KW-0472">Membrane</keyword>
<keyword id="KW-0479">Metal-binding</keyword>
<keyword id="KW-1185">Reference proteome</keyword>
<keyword id="KW-0831">Ubiquinone biosynthesis</keyword>
<reference key="1">
    <citation type="journal article" date="2002" name="Nucleic Acids Res.">
        <title>Genome sequence of Shigella flexneri 2a: insights into pathogenicity through comparison with genomes of Escherichia coli K12 and O157.</title>
        <authorList>
            <person name="Jin Q."/>
            <person name="Yuan Z."/>
            <person name="Xu J."/>
            <person name="Wang Y."/>
            <person name="Shen Y."/>
            <person name="Lu W."/>
            <person name="Wang J."/>
            <person name="Liu H."/>
            <person name="Yang J."/>
            <person name="Yang F."/>
            <person name="Zhang X."/>
            <person name="Zhang J."/>
            <person name="Yang G."/>
            <person name="Wu H."/>
            <person name="Qu D."/>
            <person name="Dong J."/>
            <person name="Sun L."/>
            <person name="Xue Y."/>
            <person name="Zhao A."/>
            <person name="Gao Y."/>
            <person name="Zhu J."/>
            <person name="Kan B."/>
            <person name="Ding K."/>
            <person name="Chen S."/>
            <person name="Cheng H."/>
            <person name="Yao Z."/>
            <person name="He B."/>
            <person name="Chen R."/>
            <person name="Ma D."/>
            <person name="Qiang B."/>
            <person name="Wen Y."/>
            <person name="Hou Y."/>
            <person name="Yu J."/>
        </authorList>
    </citation>
    <scope>NUCLEOTIDE SEQUENCE [LARGE SCALE GENOMIC DNA]</scope>
    <source>
        <strain>301 / Serotype 2a</strain>
    </source>
</reference>
<reference key="2">
    <citation type="journal article" date="2003" name="Infect. Immun.">
        <title>Complete genome sequence and comparative genomics of Shigella flexneri serotype 2a strain 2457T.</title>
        <authorList>
            <person name="Wei J."/>
            <person name="Goldberg M.B."/>
            <person name="Burland V."/>
            <person name="Venkatesan M.M."/>
            <person name="Deng W."/>
            <person name="Fournier G."/>
            <person name="Mayhew G.F."/>
            <person name="Plunkett G. III"/>
            <person name="Rose D.J."/>
            <person name="Darling A."/>
            <person name="Mau B."/>
            <person name="Perna N.T."/>
            <person name="Payne S.M."/>
            <person name="Runyen-Janecky L.J."/>
            <person name="Zhou S."/>
            <person name="Schwartz D.C."/>
            <person name="Blattner F.R."/>
        </authorList>
    </citation>
    <scope>NUCLEOTIDE SEQUENCE [LARGE SCALE GENOMIC DNA]</scope>
    <source>
        <strain>ATCC 700930 / 2457T / Serotype 2a</strain>
    </source>
</reference>
<protein>
    <recommendedName>
        <fullName evidence="1">3-octaprenyl-4-hydroxybenzoate carboxy-lyase</fullName>
        <ecNumber evidence="1">4.1.1.98</ecNumber>
    </recommendedName>
    <alternativeName>
        <fullName evidence="1">Polyprenyl p-hydroxybenzoate decarboxylase</fullName>
    </alternativeName>
</protein>
<evidence type="ECO:0000255" key="1">
    <source>
        <dbReference type="HAMAP-Rule" id="MF_01636"/>
    </source>
</evidence>
<evidence type="ECO:0000305" key="2"/>